<accession>Q0KEX1</accession>
<keyword id="KW-0997">Cell inner membrane</keyword>
<keyword id="KW-1003">Cell membrane</keyword>
<keyword id="KW-0472">Membrane</keyword>
<keyword id="KW-1185">Reference proteome</keyword>
<keyword id="KW-0769">Symport</keyword>
<keyword id="KW-0812">Transmembrane</keyword>
<keyword id="KW-1133">Transmembrane helix</keyword>
<keyword id="KW-0813">Transport</keyword>
<gene>
    <name evidence="1" type="primary">dctA</name>
    <name type="ordered locus">H16_A0299</name>
</gene>
<reference key="1">
    <citation type="journal article" date="2006" name="Nat. Biotechnol.">
        <title>Genome sequence of the bioplastic-producing 'Knallgas' bacterium Ralstonia eutropha H16.</title>
        <authorList>
            <person name="Pohlmann A."/>
            <person name="Fricke W.F."/>
            <person name="Reinecke F."/>
            <person name="Kusian B."/>
            <person name="Liesegang H."/>
            <person name="Cramm R."/>
            <person name="Eitinger T."/>
            <person name="Ewering C."/>
            <person name="Poetter M."/>
            <person name="Schwartz E."/>
            <person name="Strittmatter A."/>
            <person name="Voss I."/>
            <person name="Gottschalk G."/>
            <person name="Steinbuechel A."/>
            <person name="Friedrich B."/>
            <person name="Bowien B."/>
        </authorList>
    </citation>
    <scope>NUCLEOTIDE SEQUENCE [LARGE SCALE GENOMIC DNA]</scope>
    <source>
        <strain>ATCC 17699 / DSM 428 / KCTC 22496 / NCIMB 10442 / H16 / Stanier 337</strain>
    </source>
</reference>
<sequence>MRKPFYKILYVQVLFAICVGILLGHYWPDTGVAMKPLGDGFIKLIKMIIGPIIFCTVVTGIAGMSDMKKVGRVGGKALLYFEVVSTFALLIGLGAAHLLKPGVGFNIDPATLDTKAIAQYVSKAHGQSTVEFLMHIIPDTVFSAFANGDILQILLVSLFFGAALAVLGERARIVVQLIEQVSKVFFHIVHVITKVAPIGAFGAMAFTIGKYGLGSLVPLLKLIGTFYFTAIIFVLVVLGTIARMTGFSIVRFISYIKEELLIVLGTSSSEAALPHMMEKLEKLGCSRSVVGLVVPTGYSFNLDGTNIYMTMAVIFIAQATGIELTLMQQLTILAVAMITSKGASGVTGSGFITLAATLAVVPTIPVAGMVLILGIDRFMSECRALTNIIGNGVATVVVSAWERELDRKRLASVLNGGSGDVADLADVGQGVR</sequence>
<feature type="chain" id="PRO_1000067458" description="C4-dicarboxylate transport protein">
    <location>
        <begin position="1"/>
        <end position="432"/>
    </location>
</feature>
<feature type="transmembrane region" description="Helical" evidence="1">
    <location>
        <begin position="8"/>
        <end position="28"/>
    </location>
</feature>
<feature type="transmembrane region" description="Helical" evidence="1">
    <location>
        <begin position="44"/>
        <end position="64"/>
    </location>
</feature>
<feature type="transmembrane region" description="Helical" evidence="1">
    <location>
        <begin position="78"/>
        <end position="98"/>
    </location>
</feature>
<feature type="transmembrane region" description="Helical" evidence="1">
    <location>
        <begin position="148"/>
        <end position="168"/>
    </location>
</feature>
<feature type="transmembrane region" description="Helical" evidence="1">
    <location>
        <begin position="188"/>
        <end position="208"/>
    </location>
</feature>
<feature type="transmembrane region" description="Helical" evidence="1">
    <location>
        <begin position="222"/>
        <end position="242"/>
    </location>
</feature>
<feature type="transmembrane region" description="Helical" evidence="1">
    <location>
        <begin position="307"/>
        <end position="327"/>
    </location>
</feature>
<feature type="transmembrane region" description="Helical" evidence="1">
    <location>
        <begin position="355"/>
        <end position="375"/>
    </location>
</feature>
<organism>
    <name type="scientific">Cupriavidus necator (strain ATCC 17699 / DSM 428 / KCTC 22496 / NCIMB 10442 / H16 / Stanier 337)</name>
    <name type="common">Ralstonia eutropha</name>
    <dbReference type="NCBI Taxonomy" id="381666"/>
    <lineage>
        <taxon>Bacteria</taxon>
        <taxon>Pseudomonadati</taxon>
        <taxon>Pseudomonadota</taxon>
        <taxon>Betaproteobacteria</taxon>
        <taxon>Burkholderiales</taxon>
        <taxon>Burkholderiaceae</taxon>
        <taxon>Cupriavidus</taxon>
    </lineage>
</organism>
<proteinExistence type="inferred from homology"/>
<protein>
    <recommendedName>
        <fullName evidence="1">C4-dicarboxylate transport protein</fullName>
    </recommendedName>
</protein>
<comment type="function">
    <text evidence="1">Responsible for the transport of dicarboxylates such as succinate, fumarate, and malate from the periplasm across the membrane.</text>
</comment>
<comment type="subcellular location">
    <subcellularLocation>
        <location evidence="1">Cell inner membrane</location>
        <topology evidence="1">Multi-pass membrane protein</topology>
    </subcellularLocation>
</comment>
<comment type="similarity">
    <text evidence="1">Belongs to the dicarboxylate/amino acid:cation symporter (DAACS) (TC 2.A.23) family.</text>
</comment>
<dbReference type="EMBL" id="AM260479">
    <property type="protein sequence ID" value="CAJ91450.1"/>
    <property type="molecule type" value="Genomic_DNA"/>
</dbReference>
<dbReference type="RefSeq" id="WP_010814864.1">
    <property type="nucleotide sequence ID" value="NZ_CP039287.1"/>
</dbReference>
<dbReference type="SMR" id="Q0KEX1"/>
<dbReference type="STRING" id="381666.H16_A0299"/>
<dbReference type="KEGG" id="reh:H16_A0299"/>
<dbReference type="eggNOG" id="COG1301">
    <property type="taxonomic scope" value="Bacteria"/>
</dbReference>
<dbReference type="HOGENOM" id="CLU_019375_7_0_4"/>
<dbReference type="OrthoDB" id="9766690at2"/>
<dbReference type="Proteomes" id="UP000008210">
    <property type="component" value="Chromosome 1"/>
</dbReference>
<dbReference type="GO" id="GO:0005886">
    <property type="term" value="C:plasma membrane"/>
    <property type="evidence" value="ECO:0007669"/>
    <property type="project" value="UniProtKB-SubCell"/>
</dbReference>
<dbReference type="GO" id="GO:0015138">
    <property type="term" value="F:fumarate transmembrane transporter activity"/>
    <property type="evidence" value="ECO:0007669"/>
    <property type="project" value="TreeGrafter"/>
</dbReference>
<dbReference type="GO" id="GO:0015366">
    <property type="term" value="F:malate:proton symporter activity"/>
    <property type="evidence" value="ECO:0007669"/>
    <property type="project" value="TreeGrafter"/>
</dbReference>
<dbReference type="GO" id="GO:0015141">
    <property type="term" value="F:succinate transmembrane transporter activity"/>
    <property type="evidence" value="ECO:0007669"/>
    <property type="project" value="TreeGrafter"/>
</dbReference>
<dbReference type="GO" id="GO:0070778">
    <property type="term" value="P:L-aspartate transmembrane transport"/>
    <property type="evidence" value="ECO:0007669"/>
    <property type="project" value="TreeGrafter"/>
</dbReference>
<dbReference type="FunFam" id="1.10.3860.10:FF:000001">
    <property type="entry name" value="C4-dicarboxylate transport protein"/>
    <property type="match status" value="1"/>
</dbReference>
<dbReference type="Gene3D" id="1.10.3860.10">
    <property type="entry name" value="Sodium:dicarboxylate symporter"/>
    <property type="match status" value="1"/>
</dbReference>
<dbReference type="HAMAP" id="MF_01300">
    <property type="entry name" value="C4_dicarb_transport"/>
    <property type="match status" value="1"/>
</dbReference>
<dbReference type="InterPro" id="IPR023954">
    <property type="entry name" value="C4_dicarb_transport"/>
</dbReference>
<dbReference type="InterPro" id="IPR001991">
    <property type="entry name" value="Na-dicarboxylate_symporter"/>
</dbReference>
<dbReference type="InterPro" id="IPR018107">
    <property type="entry name" value="Na-dicarboxylate_symporter_CS"/>
</dbReference>
<dbReference type="InterPro" id="IPR036458">
    <property type="entry name" value="Na:dicarbo_symporter_sf"/>
</dbReference>
<dbReference type="NCBIfam" id="NF002461">
    <property type="entry name" value="PRK01663.1"/>
    <property type="match status" value="1"/>
</dbReference>
<dbReference type="NCBIfam" id="NF009587">
    <property type="entry name" value="PRK13027.1"/>
    <property type="match status" value="1"/>
</dbReference>
<dbReference type="PANTHER" id="PTHR42865:SF1">
    <property type="entry name" value="AEROBIC C4-DICARBOXYLATE TRANSPORT PROTEIN"/>
    <property type="match status" value="1"/>
</dbReference>
<dbReference type="PANTHER" id="PTHR42865">
    <property type="entry name" value="PROTON/GLUTAMATE-ASPARTATE SYMPORTER"/>
    <property type="match status" value="1"/>
</dbReference>
<dbReference type="Pfam" id="PF00375">
    <property type="entry name" value="SDF"/>
    <property type="match status" value="1"/>
</dbReference>
<dbReference type="PRINTS" id="PR00173">
    <property type="entry name" value="EDTRNSPORT"/>
</dbReference>
<dbReference type="SUPFAM" id="SSF118215">
    <property type="entry name" value="Proton glutamate symport protein"/>
    <property type="match status" value="1"/>
</dbReference>
<dbReference type="PROSITE" id="PS00713">
    <property type="entry name" value="NA_DICARBOXYL_SYMP_1"/>
    <property type="match status" value="1"/>
</dbReference>
<dbReference type="PROSITE" id="PS00714">
    <property type="entry name" value="NA_DICARBOXYL_SYMP_2"/>
    <property type="match status" value="1"/>
</dbReference>
<name>DCTA_CUPNH</name>
<evidence type="ECO:0000255" key="1">
    <source>
        <dbReference type="HAMAP-Rule" id="MF_01300"/>
    </source>
</evidence>